<proteinExistence type="inferred from homology"/>
<gene>
    <name evidence="1" type="primary">gatB</name>
    <name type="ordered locus">Glov_3194</name>
</gene>
<protein>
    <recommendedName>
        <fullName evidence="1">Aspartyl/glutamyl-tRNA(Asn/Gln) amidotransferase subunit B</fullName>
        <shortName evidence="1">Asp/Glu-ADT subunit B</shortName>
        <ecNumber evidence="1">6.3.5.-</ecNumber>
    </recommendedName>
</protein>
<evidence type="ECO:0000255" key="1">
    <source>
        <dbReference type="HAMAP-Rule" id="MF_00121"/>
    </source>
</evidence>
<reference key="1">
    <citation type="submission" date="2008-05" db="EMBL/GenBank/DDBJ databases">
        <title>Complete sequence of chromosome of Geobacter lovleyi SZ.</title>
        <authorList>
            <consortium name="US DOE Joint Genome Institute"/>
            <person name="Lucas S."/>
            <person name="Copeland A."/>
            <person name="Lapidus A."/>
            <person name="Glavina del Rio T."/>
            <person name="Dalin E."/>
            <person name="Tice H."/>
            <person name="Bruce D."/>
            <person name="Goodwin L."/>
            <person name="Pitluck S."/>
            <person name="Chertkov O."/>
            <person name="Meincke L."/>
            <person name="Brettin T."/>
            <person name="Detter J.C."/>
            <person name="Han C."/>
            <person name="Tapia R."/>
            <person name="Kuske C.R."/>
            <person name="Schmutz J."/>
            <person name="Larimer F."/>
            <person name="Land M."/>
            <person name="Hauser L."/>
            <person name="Kyrpides N."/>
            <person name="Mikhailova N."/>
            <person name="Sung Y."/>
            <person name="Fletcher K.E."/>
            <person name="Ritalahti K.M."/>
            <person name="Loeffler F.E."/>
            <person name="Richardson P."/>
        </authorList>
    </citation>
    <scope>NUCLEOTIDE SEQUENCE [LARGE SCALE GENOMIC DNA]</scope>
    <source>
        <strain>ATCC BAA-1151 / DSM 17278 / SZ</strain>
    </source>
</reference>
<sequence>MRFQPVIGLEVHVQLKTDSKIFCGCSTRFGAEPNLNTCPVCLALPGALPVLNQKVVEFAIMAGLATNCSISPTNIFARKNYFYPDLPKGYQISQFDLPICLAGHLDIAVGDQTKRIGITRIHMEEDAGKLVHGQGGGSGVDLNRAGTPLLEVVSEPDMRTADEAVAYLKKLYQIVTYLGICDGNMEEGSFRCDANVSVMPVGSGTFGTRAEIKNVNSFKFVKAAIEYEIARQCELIEDGGKVVQETRLFDPNKGVTRSMRGKEEAHDYRYFPDPDLVPVVISDDWIKRVKNELPELPEVKFNRFLTEYSLPEYDADVLTSSRPLADYFEQCAQTCNNAKAAANWVMGELTRSLNDNGIAIEDSPVSPAQLAGLIKLIDGGTISGTIAKKVFEDLWKNGGEAAAIVEQQGLAQVSDTGAIETAIDQIMAANMGQVEEYRGGKDKVFGFFVGQVMKAMKGKANPAVVNDLLKQKLAG</sequence>
<feature type="chain" id="PRO_1000095214" description="Aspartyl/glutamyl-tRNA(Asn/Gln) amidotransferase subunit B">
    <location>
        <begin position="1"/>
        <end position="475"/>
    </location>
</feature>
<comment type="function">
    <text evidence="1">Allows the formation of correctly charged Asn-tRNA(Asn) or Gln-tRNA(Gln) through the transamidation of misacylated Asp-tRNA(Asn) or Glu-tRNA(Gln) in organisms which lack either or both of asparaginyl-tRNA or glutaminyl-tRNA synthetases. The reaction takes place in the presence of glutamine and ATP through an activated phospho-Asp-tRNA(Asn) or phospho-Glu-tRNA(Gln).</text>
</comment>
<comment type="catalytic activity">
    <reaction evidence="1">
        <text>L-glutamyl-tRNA(Gln) + L-glutamine + ATP + H2O = L-glutaminyl-tRNA(Gln) + L-glutamate + ADP + phosphate + H(+)</text>
        <dbReference type="Rhea" id="RHEA:17521"/>
        <dbReference type="Rhea" id="RHEA-COMP:9681"/>
        <dbReference type="Rhea" id="RHEA-COMP:9684"/>
        <dbReference type="ChEBI" id="CHEBI:15377"/>
        <dbReference type="ChEBI" id="CHEBI:15378"/>
        <dbReference type="ChEBI" id="CHEBI:29985"/>
        <dbReference type="ChEBI" id="CHEBI:30616"/>
        <dbReference type="ChEBI" id="CHEBI:43474"/>
        <dbReference type="ChEBI" id="CHEBI:58359"/>
        <dbReference type="ChEBI" id="CHEBI:78520"/>
        <dbReference type="ChEBI" id="CHEBI:78521"/>
        <dbReference type="ChEBI" id="CHEBI:456216"/>
    </reaction>
</comment>
<comment type="catalytic activity">
    <reaction evidence="1">
        <text>L-aspartyl-tRNA(Asn) + L-glutamine + ATP + H2O = L-asparaginyl-tRNA(Asn) + L-glutamate + ADP + phosphate + 2 H(+)</text>
        <dbReference type="Rhea" id="RHEA:14513"/>
        <dbReference type="Rhea" id="RHEA-COMP:9674"/>
        <dbReference type="Rhea" id="RHEA-COMP:9677"/>
        <dbReference type="ChEBI" id="CHEBI:15377"/>
        <dbReference type="ChEBI" id="CHEBI:15378"/>
        <dbReference type="ChEBI" id="CHEBI:29985"/>
        <dbReference type="ChEBI" id="CHEBI:30616"/>
        <dbReference type="ChEBI" id="CHEBI:43474"/>
        <dbReference type="ChEBI" id="CHEBI:58359"/>
        <dbReference type="ChEBI" id="CHEBI:78515"/>
        <dbReference type="ChEBI" id="CHEBI:78516"/>
        <dbReference type="ChEBI" id="CHEBI:456216"/>
    </reaction>
</comment>
<comment type="subunit">
    <text evidence="1">Heterotrimer of A, B and C subunits.</text>
</comment>
<comment type="similarity">
    <text evidence="1">Belongs to the GatB/GatE family. GatB subfamily.</text>
</comment>
<keyword id="KW-0067">ATP-binding</keyword>
<keyword id="KW-0436">Ligase</keyword>
<keyword id="KW-0547">Nucleotide-binding</keyword>
<keyword id="KW-0648">Protein biosynthesis</keyword>
<keyword id="KW-1185">Reference proteome</keyword>
<accession>B3EA25</accession>
<organism>
    <name type="scientific">Trichlorobacter lovleyi (strain ATCC BAA-1151 / DSM 17278 / SZ)</name>
    <name type="common">Geobacter lovleyi</name>
    <dbReference type="NCBI Taxonomy" id="398767"/>
    <lineage>
        <taxon>Bacteria</taxon>
        <taxon>Pseudomonadati</taxon>
        <taxon>Thermodesulfobacteriota</taxon>
        <taxon>Desulfuromonadia</taxon>
        <taxon>Geobacterales</taxon>
        <taxon>Geobacteraceae</taxon>
        <taxon>Trichlorobacter</taxon>
    </lineage>
</organism>
<name>GATB_TRIL1</name>
<dbReference type="EC" id="6.3.5.-" evidence="1"/>
<dbReference type="EMBL" id="CP001089">
    <property type="protein sequence ID" value="ACD96900.1"/>
    <property type="molecule type" value="Genomic_DNA"/>
</dbReference>
<dbReference type="RefSeq" id="WP_012471224.1">
    <property type="nucleotide sequence ID" value="NC_010814.1"/>
</dbReference>
<dbReference type="SMR" id="B3EA25"/>
<dbReference type="STRING" id="398767.Glov_3194"/>
<dbReference type="KEGG" id="glo:Glov_3194"/>
<dbReference type="eggNOG" id="COG0064">
    <property type="taxonomic scope" value="Bacteria"/>
</dbReference>
<dbReference type="HOGENOM" id="CLU_019240_0_0_7"/>
<dbReference type="OrthoDB" id="9804078at2"/>
<dbReference type="Proteomes" id="UP000002420">
    <property type="component" value="Chromosome"/>
</dbReference>
<dbReference type="GO" id="GO:0050566">
    <property type="term" value="F:asparaginyl-tRNA synthase (glutamine-hydrolyzing) activity"/>
    <property type="evidence" value="ECO:0007669"/>
    <property type="project" value="RHEA"/>
</dbReference>
<dbReference type="GO" id="GO:0005524">
    <property type="term" value="F:ATP binding"/>
    <property type="evidence" value="ECO:0007669"/>
    <property type="project" value="UniProtKB-KW"/>
</dbReference>
<dbReference type="GO" id="GO:0050567">
    <property type="term" value="F:glutaminyl-tRNA synthase (glutamine-hydrolyzing) activity"/>
    <property type="evidence" value="ECO:0007669"/>
    <property type="project" value="UniProtKB-UniRule"/>
</dbReference>
<dbReference type="GO" id="GO:0070681">
    <property type="term" value="P:glutaminyl-tRNAGln biosynthesis via transamidation"/>
    <property type="evidence" value="ECO:0007669"/>
    <property type="project" value="TreeGrafter"/>
</dbReference>
<dbReference type="GO" id="GO:0006412">
    <property type="term" value="P:translation"/>
    <property type="evidence" value="ECO:0007669"/>
    <property type="project" value="UniProtKB-UniRule"/>
</dbReference>
<dbReference type="FunFam" id="1.10.10.410:FF:000001">
    <property type="entry name" value="Aspartyl/glutamyl-tRNA(Asn/Gln) amidotransferase subunit B"/>
    <property type="match status" value="1"/>
</dbReference>
<dbReference type="FunFam" id="1.10.150.380:FF:000001">
    <property type="entry name" value="Aspartyl/glutamyl-tRNA(Asn/Gln) amidotransferase subunit B"/>
    <property type="match status" value="1"/>
</dbReference>
<dbReference type="Gene3D" id="1.10.10.410">
    <property type="match status" value="1"/>
</dbReference>
<dbReference type="Gene3D" id="1.10.150.380">
    <property type="entry name" value="GatB domain, N-terminal subdomain"/>
    <property type="match status" value="1"/>
</dbReference>
<dbReference type="HAMAP" id="MF_00121">
    <property type="entry name" value="GatB"/>
    <property type="match status" value="1"/>
</dbReference>
<dbReference type="InterPro" id="IPR017959">
    <property type="entry name" value="Asn/Gln-tRNA_amidoTrfase_suB/E"/>
</dbReference>
<dbReference type="InterPro" id="IPR006075">
    <property type="entry name" value="Asn/Gln-tRNA_Trfase_suB/E_cat"/>
</dbReference>
<dbReference type="InterPro" id="IPR018027">
    <property type="entry name" value="Asn/Gln_amidotransferase"/>
</dbReference>
<dbReference type="InterPro" id="IPR003789">
    <property type="entry name" value="Asn/Gln_tRNA_amidoTrase-B-like"/>
</dbReference>
<dbReference type="InterPro" id="IPR004413">
    <property type="entry name" value="GatB"/>
</dbReference>
<dbReference type="InterPro" id="IPR042114">
    <property type="entry name" value="GatB_C_1"/>
</dbReference>
<dbReference type="InterPro" id="IPR023168">
    <property type="entry name" value="GatB_Yqey_C_2"/>
</dbReference>
<dbReference type="InterPro" id="IPR017958">
    <property type="entry name" value="Gln-tRNA_amidoTrfase_suB_CS"/>
</dbReference>
<dbReference type="InterPro" id="IPR014746">
    <property type="entry name" value="Gln_synth/guanido_kin_cat_dom"/>
</dbReference>
<dbReference type="NCBIfam" id="TIGR00133">
    <property type="entry name" value="gatB"/>
    <property type="match status" value="1"/>
</dbReference>
<dbReference type="NCBIfam" id="NF004012">
    <property type="entry name" value="PRK05477.1-2"/>
    <property type="match status" value="1"/>
</dbReference>
<dbReference type="NCBIfam" id="NF004014">
    <property type="entry name" value="PRK05477.1-4"/>
    <property type="match status" value="1"/>
</dbReference>
<dbReference type="NCBIfam" id="NF004015">
    <property type="entry name" value="PRK05477.1-5"/>
    <property type="match status" value="1"/>
</dbReference>
<dbReference type="PANTHER" id="PTHR11659">
    <property type="entry name" value="GLUTAMYL-TRNA GLN AMIDOTRANSFERASE SUBUNIT B MITOCHONDRIAL AND PROKARYOTIC PET112-RELATED"/>
    <property type="match status" value="1"/>
</dbReference>
<dbReference type="PANTHER" id="PTHR11659:SF0">
    <property type="entry name" value="GLUTAMYL-TRNA(GLN) AMIDOTRANSFERASE SUBUNIT B, MITOCHONDRIAL"/>
    <property type="match status" value="1"/>
</dbReference>
<dbReference type="Pfam" id="PF02934">
    <property type="entry name" value="GatB_N"/>
    <property type="match status" value="1"/>
</dbReference>
<dbReference type="Pfam" id="PF02637">
    <property type="entry name" value="GatB_Yqey"/>
    <property type="match status" value="1"/>
</dbReference>
<dbReference type="SMART" id="SM00845">
    <property type="entry name" value="GatB_Yqey"/>
    <property type="match status" value="1"/>
</dbReference>
<dbReference type="SUPFAM" id="SSF89095">
    <property type="entry name" value="GatB/YqeY motif"/>
    <property type="match status" value="1"/>
</dbReference>
<dbReference type="SUPFAM" id="SSF55931">
    <property type="entry name" value="Glutamine synthetase/guanido kinase"/>
    <property type="match status" value="1"/>
</dbReference>
<dbReference type="PROSITE" id="PS01234">
    <property type="entry name" value="GATB"/>
    <property type="match status" value="1"/>
</dbReference>